<feature type="chain" id="PRO_0000078193" description="Hemorrhagic metalloproteinase-disintegrin-like kaouthiagin">
    <location>
        <begin position="1"/>
        <end position="401"/>
    </location>
</feature>
<feature type="domain" description="Peptidase M12B" evidence="3">
    <location>
        <begin position="14"/>
        <end position="208"/>
    </location>
</feature>
<feature type="domain" description="Disintegrin" evidence="2">
    <location>
        <begin position="216"/>
        <end position="285"/>
    </location>
</feature>
<feature type="short sequence motif" description="D/ECD-tripeptide">
    <location>
        <begin position="263"/>
        <end position="265"/>
    </location>
</feature>
<feature type="active site" evidence="3 4">
    <location>
        <position position="150"/>
    </location>
</feature>
<feature type="binding site" evidence="1">
    <location>
        <position position="17"/>
    </location>
    <ligand>
        <name>Ca(2+)</name>
        <dbReference type="ChEBI" id="CHEBI:29108"/>
        <label>1</label>
    </ligand>
</feature>
<feature type="binding site" evidence="1">
    <location>
        <position position="101"/>
    </location>
    <ligand>
        <name>Ca(2+)</name>
        <dbReference type="ChEBI" id="CHEBI:29108"/>
        <label>1</label>
    </ligand>
</feature>
<feature type="binding site" evidence="1">
    <location>
        <position position="149"/>
    </location>
    <ligand>
        <name>Zn(2+)</name>
        <dbReference type="ChEBI" id="CHEBI:29105"/>
        <note>catalytic</note>
    </ligand>
</feature>
<feature type="binding site" evidence="1">
    <location>
        <position position="153"/>
    </location>
    <ligand>
        <name>Zn(2+)</name>
        <dbReference type="ChEBI" id="CHEBI:29105"/>
        <note>catalytic</note>
    </ligand>
</feature>
<feature type="binding site" evidence="1">
    <location>
        <position position="159"/>
    </location>
    <ligand>
        <name>Zn(2+)</name>
        <dbReference type="ChEBI" id="CHEBI:29105"/>
        <note>catalytic</note>
    </ligand>
</feature>
<feature type="binding site" evidence="1">
    <location>
        <position position="203"/>
    </location>
    <ligand>
        <name>Ca(2+)</name>
        <dbReference type="ChEBI" id="CHEBI:29108"/>
        <label>1</label>
    </ligand>
</feature>
<feature type="binding site" evidence="1">
    <location>
        <position position="206"/>
    </location>
    <ligand>
        <name>Ca(2+)</name>
        <dbReference type="ChEBI" id="CHEBI:29108"/>
        <label>1</label>
    </ligand>
</feature>
<feature type="binding site" evidence="1">
    <location>
        <position position="218"/>
    </location>
    <ligand>
        <name>Ca(2+)</name>
        <dbReference type="ChEBI" id="CHEBI:29108"/>
        <label>2</label>
    </ligand>
</feature>
<feature type="binding site" evidence="1">
    <location>
        <position position="221"/>
    </location>
    <ligand>
        <name>Ca(2+)</name>
        <dbReference type="ChEBI" id="CHEBI:29108"/>
        <label>2</label>
    </ligand>
</feature>
<feature type="binding site" evidence="1">
    <location>
        <position position="223"/>
    </location>
    <ligand>
        <name>Ca(2+)</name>
        <dbReference type="ChEBI" id="CHEBI:29108"/>
        <label>2</label>
    </ligand>
</feature>
<feature type="binding site" evidence="1">
    <location>
        <position position="225"/>
    </location>
    <ligand>
        <name>Ca(2+)</name>
        <dbReference type="ChEBI" id="CHEBI:29108"/>
        <label>2</label>
    </ligand>
</feature>
<feature type="binding site" evidence="1">
    <location>
        <position position="228"/>
    </location>
    <ligand>
        <name>Ca(2+)</name>
        <dbReference type="ChEBI" id="CHEBI:29108"/>
        <label>2</label>
    </ligand>
</feature>
<feature type="binding site" evidence="1">
    <location>
        <position position="231"/>
    </location>
    <ligand>
        <name>Ca(2+)</name>
        <dbReference type="ChEBI" id="CHEBI:29108"/>
        <label>2</label>
    </ligand>
</feature>
<feature type="binding site" evidence="1">
    <location>
        <position position="265"/>
    </location>
    <ligand>
        <name>Ca(2+)</name>
        <dbReference type="ChEBI" id="CHEBI:29108"/>
        <label>3</label>
    </ligand>
</feature>
<feature type="binding site" evidence="1">
    <location>
        <position position="266"/>
    </location>
    <ligand>
        <name>Ca(2+)</name>
        <dbReference type="ChEBI" id="CHEBI:29108"/>
        <label>3</label>
    </ligand>
</feature>
<feature type="binding site" evidence="1">
    <location>
        <position position="268"/>
    </location>
    <ligand>
        <name>Ca(2+)</name>
        <dbReference type="ChEBI" id="CHEBI:29108"/>
        <label>3</label>
    </ligand>
</feature>
<feature type="binding site" evidence="1">
    <location>
        <position position="280"/>
    </location>
    <ligand>
        <name>Ca(2+)</name>
        <dbReference type="ChEBI" id="CHEBI:29108"/>
        <label>3</label>
    </ligand>
</feature>
<feature type="glycosylation site" description="N-linked (GlcNAc...) asparagine" evidence="5">
    <location>
        <position position="112"/>
    </location>
</feature>
<feature type="disulfide bond" evidence="1">
    <location>
        <begin position="125"/>
        <end position="203"/>
    </location>
</feature>
<feature type="disulfide bond" evidence="1">
    <location>
        <begin position="164"/>
        <end position="187"/>
    </location>
</feature>
<feature type="disulfide bond" evidence="1">
    <location>
        <begin position="166"/>
        <end position="171"/>
    </location>
</feature>
<feature type="disulfide bond" evidence="1">
    <location>
        <begin position="219"/>
        <end position="248"/>
    </location>
</feature>
<feature type="disulfide bond" evidence="1">
    <location>
        <begin position="230"/>
        <end position="243"/>
    </location>
</feature>
<feature type="disulfide bond" evidence="1">
    <location>
        <begin position="232"/>
        <end position="238"/>
    </location>
</feature>
<feature type="disulfide bond" evidence="1">
    <location>
        <begin position="257"/>
        <end position="277"/>
    </location>
</feature>
<feature type="disulfide bond" evidence="1">
    <location>
        <begin position="264"/>
        <end position="296"/>
    </location>
</feature>
<feature type="disulfide bond" evidence="1">
    <location>
        <begin position="289"/>
        <end position="301"/>
    </location>
</feature>
<feature type="disulfide bond" evidence="1">
    <location>
        <begin position="308"/>
        <end position="358"/>
    </location>
</feature>
<feature type="disulfide bond" evidence="1">
    <location>
        <begin position="323"/>
        <end position="366"/>
    </location>
</feature>
<feature type="disulfide bond" evidence="1">
    <location>
        <begin position="336"/>
        <end position="346"/>
    </location>
</feature>
<feature type="disulfide bond" evidence="1">
    <location>
        <begin position="353"/>
        <end position="389"/>
    </location>
</feature>
<feature type="disulfide bond" evidence="1">
    <location>
        <begin position="383"/>
        <end position="394"/>
    </location>
</feature>
<comment type="function">
    <text evidence="5">Snake venom zinc protease that inhibits hemostasis by binding and cleaving the vWF in humans. Also has and inhibitory effect on the collagen-induced platelet aggregation.</text>
</comment>
<comment type="cofactor">
    <cofactor evidence="1">
        <name>Zn(2+)</name>
        <dbReference type="ChEBI" id="CHEBI:29105"/>
    </cofactor>
    <text evidence="1">Binds 1 zinc ion per subunit.</text>
</comment>
<comment type="subunit">
    <text evidence="6">Monomer.</text>
</comment>
<comment type="subcellular location">
    <subcellularLocation>
        <location>Secreted</location>
    </subcellularLocation>
</comment>
<comment type="tissue specificity">
    <text>Expressed by the venom gland.</text>
</comment>
<comment type="similarity">
    <text evidence="7">Belongs to the venom metalloproteinase (M12B) family. P-III subfamily. P-IIIa sub-subfamily.</text>
</comment>
<proteinExistence type="evidence at protein level"/>
<sequence length="401" mass="44493">TNTPEQDRYLQAEKYIEFYVIVDNRMYRYYNYDKPAIKIRVYEMINAVNTKFRPLKIHIALIGLEIWSNEDKFEVKPAASVTLKSFREWRQTVLLPRKRNDNAQLLTGINLNGTAVGIAYPGSLCTQRSVFVVQDYNRRMSLVASTMTHELGHNLGIHHDEASCICIPGPCIMLKKRTAPAFQFSSCSIRDYQEYLLRDRPQCILNKPLSTDIVSPAICGNYFVEEGEECDCGSPAACQSACCDAATCKFNGAGAECRAAKHDCDLPELCTGQSAECPTDSLQRNGHPCQNNQGYCYNGKCPTLTNQCIALLGPHFTVSPKGCFDLNMRGDDGSFCRMEDGTKIPCAAKDVKCGRLYCTEKNTMSCLIPPNPDGIMAEPGTKCGDGMVCSKGQCVDVQTAY</sequence>
<dbReference type="EC" id="3.4.24.-"/>
<dbReference type="SMR" id="P82942"/>
<dbReference type="iPTMnet" id="P82942"/>
<dbReference type="GO" id="GO:0005576">
    <property type="term" value="C:extracellular region"/>
    <property type="evidence" value="ECO:0007669"/>
    <property type="project" value="UniProtKB-SubCell"/>
</dbReference>
<dbReference type="GO" id="GO:0005886">
    <property type="term" value="C:plasma membrane"/>
    <property type="evidence" value="ECO:0007669"/>
    <property type="project" value="TreeGrafter"/>
</dbReference>
<dbReference type="GO" id="GO:0046872">
    <property type="term" value="F:metal ion binding"/>
    <property type="evidence" value="ECO:0007669"/>
    <property type="project" value="UniProtKB-KW"/>
</dbReference>
<dbReference type="GO" id="GO:0004222">
    <property type="term" value="F:metalloendopeptidase activity"/>
    <property type="evidence" value="ECO:0007669"/>
    <property type="project" value="InterPro"/>
</dbReference>
<dbReference type="GO" id="GO:0090729">
    <property type="term" value="F:toxin activity"/>
    <property type="evidence" value="ECO:0007669"/>
    <property type="project" value="UniProtKB-KW"/>
</dbReference>
<dbReference type="GO" id="GO:0006508">
    <property type="term" value="P:proteolysis"/>
    <property type="evidence" value="ECO:0007669"/>
    <property type="project" value="UniProtKB-KW"/>
</dbReference>
<dbReference type="CDD" id="cd04269">
    <property type="entry name" value="ZnMc_adamalysin_II_like"/>
    <property type="match status" value="1"/>
</dbReference>
<dbReference type="FunFam" id="3.40.390.10:FF:000002">
    <property type="entry name" value="Disintegrin and metalloproteinase domain-containing protein 22"/>
    <property type="match status" value="1"/>
</dbReference>
<dbReference type="Gene3D" id="3.40.1620.60">
    <property type="match status" value="1"/>
</dbReference>
<dbReference type="Gene3D" id="3.40.390.10">
    <property type="entry name" value="Collagenase (Catalytic Domain)"/>
    <property type="match status" value="1"/>
</dbReference>
<dbReference type="Gene3D" id="4.10.70.10">
    <property type="entry name" value="Disintegrin domain"/>
    <property type="match status" value="1"/>
</dbReference>
<dbReference type="InterPro" id="IPR006586">
    <property type="entry name" value="ADAM_Cys-rich"/>
</dbReference>
<dbReference type="InterPro" id="IPR001762">
    <property type="entry name" value="Disintegrin_dom"/>
</dbReference>
<dbReference type="InterPro" id="IPR036436">
    <property type="entry name" value="Disintegrin_dom_sf"/>
</dbReference>
<dbReference type="InterPro" id="IPR024079">
    <property type="entry name" value="MetalloPept_cat_dom_sf"/>
</dbReference>
<dbReference type="InterPro" id="IPR001590">
    <property type="entry name" value="Peptidase_M12B"/>
</dbReference>
<dbReference type="InterPro" id="IPR034027">
    <property type="entry name" value="Reprolysin_adamalysin"/>
</dbReference>
<dbReference type="PANTHER" id="PTHR11905">
    <property type="entry name" value="ADAM A DISINTEGRIN AND METALLOPROTEASE DOMAIN"/>
    <property type="match status" value="1"/>
</dbReference>
<dbReference type="PANTHER" id="PTHR11905:SF32">
    <property type="entry name" value="DISINTEGRIN AND METALLOPROTEINASE DOMAIN-CONTAINING PROTEIN 28"/>
    <property type="match status" value="1"/>
</dbReference>
<dbReference type="Pfam" id="PF08516">
    <property type="entry name" value="ADAM_CR"/>
    <property type="match status" value="1"/>
</dbReference>
<dbReference type="Pfam" id="PF01421">
    <property type="entry name" value="Reprolysin"/>
    <property type="match status" value="1"/>
</dbReference>
<dbReference type="SMART" id="SM00608">
    <property type="entry name" value="ACR"/>
    <property type="match status" value="1"/>
</dbReference>
<dbReference type="SMART" id="SM00050">
    <property type="entry name" value="DISIN"/>
    <property type="match status" value="1"/>
</dbReference>
<dbReference type="SUPFAM" id="SSF57552">
    <property type="entry name" value="Blood coagulation inhibitor (disintegrin)"/>
    <property type="match status" value="1"/>
</dbReference>
<dbReference type="SUPFAM" id="SSF55486">
    <property type="entry name" value="Metalloproteases ('zincins'), catalytic domain"/>
    <property type="match status" value="1"/>
</dbReference>
<dbReference type="PROSITE" id="PS50215">
    <property type="entry name" value="ADAM_MEPRO"/>
    <property type="match status" value="1"/>
</dbReference>
<dbReference type="PROSITE" id="PS50214">
    <property type="entry name" value="DISINTEGRIN_2"/>
    <property type="match status" value="1"/>
</dbReference>
<dbReference type="PROSITE" id="PS00142">
    <property type="entry name" value="ZINC_PROTEASE"/>
    <property type="match status" value="1"/>
</dbReference>
<protein>
    <recommendedName>
        <fullName>Hemorrhagic metalloproteinase-disintegrin-like kaouthiagin</fullName>
        <ecNumber>3.4.24.-</ecNumber>
    </recommendedName>
    <alternativeName>
        <fullName>Snake venom metalloproteinase</fullName>
        <shortName>SVMP</shortName>
    </alternativeName>
</protein>
<keyword id="KW-0106">Calcium</keyword>
<keyword id="KW-0903">Direct protein sequencing</keyword>
<keyword id="KW-1015">Disulfide bond</keyword>
<keyword id="KW-0325">Glycoprotein</keyword>
<keyword id="KW-1199">Hemostasis impairing toxin</keyword>
<keyword id="KW-0378">Hydrolase</keyword>
<keyword id="KW-0479">Metal-binding</keyword>
<keyword id="KW-0482">Metalloprotease</keyword>
<keyword id="KW-1201">Platelet aggregation inhibiting toxin</keyword>
<keyword id="KW-0645">Protease</keyword>
<keyword id="KW-0964">Secreted</keyword>
<keyword id="KW-0800">Toxin</keyword>
<keyword id="KW-0862">Zinc</keyword>
<reference key="1">
    <citation type="journal article" date="2001" name="Biochemistry">
        <title>Complete amino acid sequence of kaouthiagin, a novel cobra venom metalloproteinase with two disintegrin-like sequences.</title>
        <authorList>
            <person name="Ito M."/>
            <person name="Hamako J."/>
            <person name="Sakurai Y."/>
            <person name="Matsumoto M."/>
            <person name="Fujimura Y."/>
            <person name="Suzuki M."/>
            <person name="Hashimoto K."/>
            <person name="Titani K."/>
            <person name="Matsui T."/>
        </authorList>
    </citation>
    <scope>PROTEIN SEQUENCE</scope>
    <scope>FUNCTION</scope>
    <scope>GLYCOSYLATION AT ASN-112</scope>
    <source>
        <tissue>Venom</tissue>
    </source>
</reference>
<reference key="2">
    <citation type="journal article" date="1998" name="Thromb. Haemost.">
        <title>Purification and characterization of kaouthiagin, a von Willebrand factor-binding and -cleaving metalloproteinase from Naha kaouthia cobra venom.</title>
        <authorList>
            <person name="Hamako J."/>
            <person name="Matsui T."/>
            <person name="Nishida S."/>
            <person name="Nomura S."/>
            <person name="Fujimura Y."/>
            <person name="Ito M."/>
            <person name="Ozeki Y."/>
            <person name="Titani K."/>
        </authorList>
    </citation>
    <scope>PARTIAL PROTEIN SEQUENCE</scope>
    <scope>SUBUNIT</scope>
    <source>
        <tissue>Venom</tissue>
    </source>
</reference>
<reference key="3">
    <citation type="journal article" date="2013" name="Proc. Natl. Acad. Sci. U.S.A.">
        <title>The king cobra genome reveals dynamic gene evolution and adaptation in the snake venom system.</title>
        <authorList>
            <person name="Vonk F.J."/>
            <person name="Casewell N.R."/>
            <person name="Henkel C.V."/>
            <person name="Heimberg A.M."/>
            <person name="Jansen H.J."/>
            <person name="McCleary R.J."/>
            <person name="Kerkkamp H.M."/>
            <person name="Vos R.A."/>
            <person name="Guerreiro I."/>
            <person name="Calvete J.J."/>
            <person name="Wuster W."/>
            <person name="Woods A.E."/>
            <person name="Logan J.M."/>
            <person name="Harrison R.A."/>
            <person name="Castoe T.A."/>
            <person name="de Koning A.P."/>
            <person name="Pollock D.D."/>
            <person name="Yandell M."/>
            <person name="Calderon D."/>
            <person name="Renjifo C."/>
            <person name="Currier R.B."/>
            <person name="Salgado D."/>
            <person name="Pla D."/>
            <person name="Sanz L."/>
            <person name="Hyder A.S."/>
            <person name="Ribeiro J.M."/>
            <person name="Arntzen J.W."/>
            <person name="van den Thillart G.E."/>
            <person name="Boetzer M."/>
            <person name="Pirovano W."/>
            <person name="Dirks R.P."/>
            <person name="Spaink H.P."/>
            <person name="Duboule D."/>
            <person name="McGlinn E."/>
            <person name="Kini R.M."/>
            <person name="Richardson M.K."/>
        </authorList>
    </citation>
    <scope>IDENTIFICATION BY MASS SPECTROMETRY</scope>
    <source>
        <tissue>Venom</tissue>
    </source>
</reference>
<organism evidence="7">
    <name type="scientific">Naja kaouthia</name>
    <name type="common">Monocled cobra</name>
    <name type="synonym">Naja siamensis</name>
    <dbReference type="NCBI Taxonomy" id="8649"/>
    <lineage>
        <taxon>Eukaryota</taxon>
        <taxon>Metazoa</taxon>
        <taxon>Chordata</taxon>
        <taxon>Craniata</taxon>
        <taxon>Vertebrata</taxon>
        <taxon>Euteleostomi</taxon>
        <taxon>Lepidosauria</taxon>
        <taxon>Squamata</taxon>
        <taxon>Bifurcata</taxon>
        <taxon>Unidentata</taxon>
        <taxon>Episquamata</taxon>
        <taxon>Toxicofera</taxon>
        <taxon>Serpentes</taxon>
        <taxon>Colubroidea</taxon>
        <taxon>Elapidae</taxon>
        <taxon>Elapinae</taxon>
        <taxon>Naja</taxon>
    </lineage>
</organism>
<name>VM3K_NAJKA</name>
<evidence type="ECO:0000250" key="1"/>
<evidence type="ECO:0000255" key="2">
    <source>
        <dbReference type="PROSITE-ProRule" id="PRU00068"/>
    </source>
</evidence>
<evidence type="ECO:0000255" key="3">
    <source>
        <dbReference type="PROSITE-ProRule" id="PRU00276"/>
    </source>
</evidence>
<evidence type="ECO:0000255" key="4">
    <source>
        <dbReference type="PROSITE-ProRule" id="PRU10095"/>
    </source>
</evidence>
<evidence type="ECO:0000269" key="5">
    <source>
    </source>
</evidence>
<evidence type="ECO:0000269" key="6">
    <source>
    </source>
</evidence>
<evidence type="ECO:0000305" key="7"/>
<accession>P82942</accession>